<reference key="1">
    <citation type="journal article" date="2007" name="Proc. Natl. Acad. Sci. U.S.A.">
        <title>Genome sequencing and comparative analysis of Saccharomyces cerevisiae strain YJM789.</title>
        <authorList>
            <person name="Wei W."/>
            <person name="McCusker J.H."/>
            <person name="Hyman R.W."/>
            <person name="Jones T."/>
            <person name="Ning Y."/>
            <person name="Cao Z."/>
            <person name="Gu Z."/>
            <person name="Bruno D."/>
            <person name="Miranda M."/>
            <person name="Nguyen M."/>
            <person name="Wilhelmy J."/>
            <person name="Komp C."/>
            <person name="Tamse R."/>
            <person name="Wang X."/>
            <person name="Jia P."/>
            <person name="Luedi P."/>
            <person name="Oefner P.J."/>
            <person name="David L."/>
            <person name="Dietrich F.S."/>
            <person name="Li Y."/>
            <person name="Davis R.W."/>
            <person name="Steinmetz L.M."/>
        </authorList>
    </citation>
    <scope>NUCLEOTIDE SEQUENCE [LARGE SCALE GENOMIC DNA]</scope>
    <source>
        <strain>YJM789</strain>
    </source>
</reference>
<sequence length="919" mass="103375">MSHHVPNLYGTPIRDPHERKRNSASMGEVNQSVSSRNCERGSEKGTKQRKKASRACDQCRRKRIKCRFDKHTGVCQGCLEVGEKCQFIRVPLKRGPAKKRASVVSIEKFSSDNDPLQYRPRTHSYPMNSGNNYLPSLARNSSFPSISSLFVPSITAQSQQFVKVPYDDIKRRSSLATLGSDSSISTEFGGNYRLDENLNVRQEGKDIVAKGMITPVEEMGACSSNVRRQGSQSLPIQEQRASPYINPFISGRSRLSSLSYTSEATTSEGNTQGKNQCMLTPNSVRSIEKERLNSLTAGCPNKKLGTDGRSDKWDKNSTWKPVYRSSNPSHPSTEKNVSLNQEASAKPLMLGTYRQFDATSFYKVLGIYYNFFHINFPVIPINKSKFTDMLDPEKPNVIDEIRQINNEIIQCFKTALEVLVFCKIKQRRSSKSTKSWSRDSLCDFQKGLYYIQNFNKCIADCFQSLITIKPVLKQNSSVIPSRIKFIYFSTIIVLNFILILAGEESSLLLGPSVGVFNEFQAHKLFLPFENTSPMLLLNSNEESGDEILDYAVLFKRLYILLNILDTLQSFRLGQPKLINLNFGSAIETYFSDKTGHNQVVEKAPVALDNILRNLKLGEFITYFVLNRKSLQVNVPHHLLFTNQTDYGEFAVEKGEHDNIAGKFETLLKKKEILIRKLLNIEQKNDHILENCCNSDAEMKNIGELVCSMITLVSGILDSITNMNAENSVDLDSKPLPNAYFAQDSEEELMSPTQSITSNLASEENTRCTTKDLMGTVSIFMLPMVEECYNIISLIGPIPTTLISLYIRNGNMAKGINDRIMTLSTALNELVQITALFNTLEPFRKNAHDRAKRYYVSATSSTGCYESVMKSMYSGKCAASNASNVAPSEEENKKILKKFADIGWKLMDDSELGCCCCFFN</sequence>
<organism>
    <name type="scientific">Saccharomyces cerevisiae (strain YJM789)</name>
    <name type="common">Baker's yeast</name>
    <dbReference type="NCBI Taxonomy" id="307796"/>
    <lineage>
        <taxon>Eukaryota</taxon>
        <taxon>Fungi</taxon>
        <taxon>Dikarya</taxon>
        <taxon>Ascomycota</taxon>
        <taxon>Saccharomycotina</taxon>
        <taxon>Saccharomycetes</taxon>
        <taxon>Saccharomycetales</taxon>
        <taxon>Saccharomycetaceae</taxon>
        <taxon>Saccharomyces</taxon>
    </lineage>
</organism>
<dbReference type="EMBL" id="AAFW02000011">
    <property type="protein sequence ID" value="EDN64646.1"/>
    <property type="molecule type" value="Genomic_DNA"/>
</dbReference>
<dbReference type="HOGENOM" id="CLU_006525_0_0_1"/>
<dbReference type="Proteomes" id="UP000007060">
    <property type="component" value="Unassembled WGS sequence"/>
</dbReference>
<dbReference type="GO" id="GO:0005634">
    <property type="term" value="C:nucleus"/>
    <property type="evidence" value="ECO:0007669"/>
    <property type="project" value="UniProtKB-SubCell"/>
</dbReference>
<dbReference type="GO" id="GO:0003677">
    <property type="term" value="F:DNA binding"/>
    <property type="evidence" value="ECO:0007669"/>
    <property type="project" value="UniProtKB-KW"/>
</dbReference>
<dbReference type="GO" id="GO:0000981">
    <property type="term" value="F:DNA-binding transcription factor activity, RNA polymerase II-specific"/>
    <property type="evidence" value="ECO:0007669"/>
    <property type="project" value="InterPro"/>
</dbReference>
<dbReference type="GO" id="GO:0008270">
    <property type="term" value="F:zinc ion binding"/>
    <property type="evidence" value="ECO:0007669"/>
    <property type="project" value="InterPro"/>
</dbReference>
<dbReference type="CDD" id="cd00067">
    <property type="entry name" value="GAL4"/>
    <property type="match status" value="1"/>
</dbReference>
<dbReference type="Gene3D" id="4.10.240.10">
    <property type="entry name" value="Zn(2)-C6 fungal-type DNA-binding domain"/>
    <property type="match status" value="1"/>
</dbReference>
<dbReference type="InterPro" id="IPR050797">
    <property type="entry name" value="Carb_Metab_Trans_Reg"/>
</dbReference>
<dbReference type="InterPro" id="IPR036864">
    <property type="entry name" value="Zn2-C6_fun-type_DNA-bd_sf"/>
</dbReference>
<dbReference type="InterPro" id="IPR001138">
    <property type="entry name" value="Zn2Cys6_DnaBD"/>
</dbReference>
<dbReference type="PANTHER" id="PTHR31668:SF26">
    <property type="entry name" value="GLUCOSE TRANSPORT TRANSCRIPTION REGULATOR RGT1-RELATED"/>
    <property type="match status" value="1"/>
</dbReference>
<dbReference type="PANTHER" id="PTHR31668">
    <property type="entry name" value="GLUCOSE TRANSPORT TRANSCRIPTION REGULATOR RGT1-RELATED-RELATED"/>
    <property type="match status" value="1"/>
</dbReference>
<dbReference type="Pfam" id="PF00172">
    <property type="entry name" value="Zn_clus"/>
    <property type="match status" value="1"/>
</dbReference>
<dbReference type="SMART" id="SM00066">
    <property type="entry name" value="GAL4"/>
    <property type="match status" value="1"/>
</dbReference>
<dbReference type="SUPFAM" id="SSF57701">
    <property type="entry name" value="Zn2/Cys6 DNA-binding domain"/>
    <property type="match status" value="1"/>
</dbReference>
<dbReference type="PROSITE" id="PS00463">
    <property type="entry name" value="ZN2_CY6_FUNGAL_1"/>
    <property type="match status" value="1"/>
</dbReference>
<dbReference type="PROSITE" id="PS50048">
    <property type="entry name" value="ZN2_CY6_FUNGAL_2"/>
    <property type="match status" value="1"/>
</dbReference>
<comment type="subunit">
    <text evidence="1">Binds DNA in a sequence-specific manner.</text>
</comment>
<comment type="subcellular location">
    <subcellularLocation>
        <location evidence="4">Nucleus</location>
    </subcellularLocation>
</comment>
<name>EDS1_YEAS7</name>
<proteinExistence type="inferred from homology"/>
<protein>
    <recommendedName>
        <fullName>Transcriptional regulatory protein EDS1</fullName>
    </recommendedName>
    <alternativeName>
        <fullName>Expression dependent on SLT2 protein 1</fullName>
    </alternativeName>
</protein>
<keyword id="KW-0238">DNA-binding</keyword>
<keyword id="KW-0479">Metal-binding</keyword>
<keyword id="KW-0539">Nucleus</keyword>
<keyword id="KW-0804">Transcription</keyword>
<keyword id="KW-0805">Transcription regulation</keyword>
<keyword id="KW-0862">Zinc</keyword>
<accession>A6ZKX7</accession>
<evidence type="ECO:0000250" key="1"/>
<evidence type="ECO:0000255" key="2">
    <source>
        <dbReference type="PROSITE-ProRule" id="PRU00227"/>
    </source>
</evidence>
<evidence type="ECO:0000256" key="3">
    <source>
        <dbReference type="SAM" id="MobiDB-lite"/>
    </source>
</evidence>
<evidence type="ECO:0000305" key="4"/>
<feature type="chain" id="PRO_0000408010" description="Transcriptional regulatory protein EDS1">
    <location>
        <begin position="1"/>
        <end position="919"/>
    </location>
</feature>
<feature type="DNA-binding region" description="Zn(2)-C6 fungal-type" evidence="2">
    <location>
        <begin position="56"/>
        <end position="85"/>
    </location>
</feature>
<feature type="region of interest" description="Disordered" evidence="3">
    <location>
        <begin position="1"/>
        <end position="54"/>
    </location>
</feature>
<feature type="region of interest" description="Disordered" evidence="3">
    <location>
        <begin position="297"/>
        <end position="338"/>
    </location>
</feature>
<feature type="compositionally biased region" description="Polar residues" evidence="3">
    <location>
        <begin position="23"/>
        <end position="36"/>
    </location>
</feature>
<feature type="compositionally biased region" description="Basic and acidic residues" evidence="3">
    <location>
        <begin position="37"/>
        <end position="46"/>
    </location>
</feature>
<feature type="compositionally biased region" description="Basic and acidic residues" evidence="3">
    <location>
        <begin position="304"/>
        <end position="317"/>
    </location>
</feature>
<feature type="compositionally biased region" description="Polar residues" evidence="3">
    <location>
        <begin position="318"/>
        <end position="338"/>
    </location>
</feature>
<gene>
    <name type="primary">EDS1</name>
    <name type="ORF">SCY_0247</name>
</gene>